<keyword id="KW-0030">Aminoacyl-tRNA synthetase</keyword>
<keyword id="KW-0067">ATP-binding</keyword>
<keyword id="KW-0963">Cytoplasm</keyword>
<keyword id="KW-0436">Ligase</keyword>
<keyword id="KW-0547">Nucleotide-binding</keyword>
<keyword id="KW-0648">Protein biosynthesis</keyword>
<reference key="1">
    <citation type="journal article" date="2008" name="J. Bacteriol.">
        <title>Comparative genome sequence analysis of multidrug-resistant Acinetobacter baumannii.</title>
        <authorList>
            <person name="Adams M.D."/>
            <person name="Goglin K."/>
            <person name="Molyneaux N."/>
            <person name="Hujer K.M."/>
            <person name="Lavender H."/>
            <person name="Jamison J.J."/>
            <person name="MacDonald I.J."/>
            <person name="Martin K.M."/>
            <person name="Russo T."/>
            <person name="Campagnari A.A."/>
            <person name="Hujer A.M."/>
            <person name="Bonomo R.A."/>
            <person name="Gill S.R."/>
        </authorList>
    </citation>
    <scope>NUCLEOTIDE SEQUENCE [LARGE SCALE GENOMIC DNA]</scope>
    <source>
        <strain>AB307-0294</strain>
    </source>
</reference>
<proteinExistence type="inferred from homology"/>
<accession>B7H051</accession>
<sequence length="874" mass="98050">MTISHIDPEYQANTIEPSVQQDWENRKVFKVADTVEGKHRYILSMFPYPSGKLHMGHVRNYTIGDVISRFYRLKGEAVLQPMGWDAFGLPAENAAIAHKVAPAKWTFENIAYMRDQLKKLGLSVDWDREFATCTPEYYHWEQWLFVQLYKKGLIYRKLSTVNWDPVDQTVLANEQVENGRGWRSGALVEKRDIPMYYFRITDYAQELLDDLDTLQDGWPQQVLTMQRNWIGRSTGMEITFPSANTEIYADGLTVYTTRADTLMGVTYVAVAAEHPLALKAAENNPELAAFIEECRMGSVAEADLATAEKKGMATGLFVKHPVTGEELPVWIANYVLMSYGSGAVMAVPAHDERDFEFANKFNLPIKQVIDAKGADDADYSATEWQEWYGSKEGKLVNSGEFDGLEFQAAFDAFLAKLEPQGLANSKVQFRLRDWGVSRQRYWGCPIPMINCDTCGQVTVPEDQLPVVLPTDVVPDGSGNPLNKMPEFYETKCPCCGGDARRETDTLDTFVESSWYYARYASPDFTGGMVKPEAAKNWLPVNQYIGGVEHAILHLLYARFFHKLMRDEGVVQGNEPFTNLLTQGMVLADTFYREAENGKKTWFNPADIELERDEKGRIISAKYSGDGQEVIIGGQEKMSKSKNNGIDPQAIIDQYGADTARVFMMFAAPPDQSLEWSDAGVEGANRFLKRVWRLVASFLEKGNSATAIDKANLSKDAQDLRRKTHETIQKVSDDIERRHAFNTAIAALMELLNASNKFEAKDDNDVAVEREAITTLLTLLAPFAPHLSQTLLAQFGTDLTEATFPEVDASALTRNTQTIVVQVNGKLRGKLEVSVDISKDELLAQAKALPEVQQFLTGPTKKEIVVPNKLVNLVV</sequence>
<evidence type="ECO:0000255" key="1">
    <source>
        <dbReference type="HAMAP-Rule" id="MF_00049"/>
    </source>
</evidence>
<dbReference type="EC" id="6.1.1.4" evidence="1"/>
<dbReference type="EMBL" id="CP001172">
    <property type="protein sequence ID" value="ACJ57618.1"/>
    <property type="molecule type" value="Genomic_DNA"/>
</dbReference>
<dbReference type="RefSeq" id="WP_000155764.1">
    <property type="nucleotide sequence ID" value="NZ_CP001172.1"/>
</dbReference>
<dbReference type="SMR" id="B7H051"/>
<dbReference type="HOGENOM" id="CLU_004427_0_0_6"/>
<dbReference type="Proteomes" id="UP000006924">
    <property type="component" value="Chromosome"/>
</dbReference>
<dbReference type="GO" id="GO:0005829">
    <property type="term" value="C:cytosol"/>
    <property type="evidence" value="ECO:0007669"/>
    <property type="project" value="TreeGrafter"/>
</dbReference>
<dbReference type="GO" id="GO:0002161">
    <property type="term" value="F:aminoacyl-tRNA deacylase activity"/>
    <property type="evidence" value="ECO:0007669"/>
    <property type="project" value="InterPro"/>
</dbReference>
<dbReference type="GO" id="GO:0005524">
    <property type="term" value="F:ATP binding"/>
    <property type="evidence" value="ECO:0007669"/>
    <property type="project" value="UniProtKB-UniRule"/>
</dbReference>
<dbReference type="GO" id="GO:0004823">
    <property type="term" value="F:leucine-tRNA ligase activity"/>
    <property type="evidence" value="ECO:0007669"/>
    <property type="project" value="UniProtKB-UniRule"/>
</dbReference>
<dbReference type="GO" id="GO:0006429">
    <property type="term" value="P:leucyl-tRNA aminoacylation"/>
    <property type="evidence" value="ECO:0007669"/>
    <property type="project" value="UniProtKB-UniRule"/>
</dbReference>
<dbReference type="CDD" id="cd07958">
    <property type="entry name" value="Anticodon_Ia_Leu_BEm"/>
    <property type="match status" value="1"/>
</dbReference>
<dbReference type="CDD" id="cd00812">
    <property type="entry name" value="LeuRS_core"/>
    <property type="match status" value="1"/>
</dbReference>
<dbReference type="FunFam" id="1.10.730.10:FF:000003">
    <property type="entry name" value="Leucine--tRNA ligase"/>
    <property type="match status" value="1"/>
</dbReference>
<dbReference type="FunFam" id="2.20.28.290:FF:000001">
    <property type="entry name" value="Leucine--tRNA ligase"/>
    <property type="match status" value="1"/>
</dbReference>
<dbReference type="FunFam" id="3.40.50.620:FF:000003">
    <property type="entry name" value="Leucine--tRNA ligase"/>
    <property type="match status" value="1"/>
</dbReference>
<dbReference type="FunFam" id="3.40.50.620:FF:000124">
    <property type="entry name" value="Leucine--tRNA ligase"/>
    <property type="match status" value="1"/>
</dbReference>
<dbReference type="FunFam" id="3.90.740.10:FF:000012">
    <property type="entry name" value="Leucine--tRNA ligase"/>
    <property type="match status" value="1"/>
</dbReference>
<dbReference type="Gene3D" id="2.20.28.290">
    <property type="match status" value="1"/>
</dbReference>
<dbReference type="Gene3D" id="3.10.20.590">
    <property type="match status" value="1"/>
</dbReference>
<dbReference type="Gene3D" id="3.40.50.620">
    <property type="entry name" value="HUPs"/>
    <property type="match status" value="2"/>
</dbReference>
<dbReference type="Gene3D" id="1.10.730.10">
    <property type="entry name" value="Isoleucyl-tRNA Synthetase, Domain 1"/>
    <property type="match status" value="1"/>
</dbReference>
<dbReference type="Gene3D" id="3.90.740.10">
    <property type="entry name" value="Valyl/Leucyl/Isoleucyl-tRNA synthetase, editing domain"/>
    <property type="match status" value="1"/>
</dbReference>
<dbReference type="HAMAP" id="MF_00049_B">
    <property type="entry name" value="Leu_tRNA_synth_B"/>
    <property type="match status" value="1"/>
</dbReference>
<dbReference type="InterPro" id="IPR001412">
    <property type="entry name" value="aa-tRNA-synth_I_CS"/>
</dbReference>
<dbReference type="InterPro" id="IPR002300">
    <property type="entry name" value="aa-tRNA-synth_Ia"/>
</dbReference>
<dbReference type="InterPro" id="IPR002302">
    <property type="entry name" value="Leu-tRNA-ligase"/>
</dbReference>
<dbReference type="InterPro" id="IPR025709">
    <property type="entry name" value="Leu_tRNA-synth_edit"/>
</dbReference>
<dbReference type="InterPro" id="IPR013155">
    <property type="entry name" value="M/V/L/I-tRNA-synth_anticd-bd"/>
</dbReference>
<dbReference type="InterPro" id="IPR015413">
    <property type="entry name" value="Methionyl/Leucyl_tRNA_Synth"/>
</dbReference>
<dbReference type="InterPro" id="IPR014729">
    <property type="entry name" value="Rossmann-like_a/b/a_fold"/>
</dbReference>
<dbReference type="InterPro" id="IPR009080">
    <property type="entry name" value="tRNAsynth_Ia_anticodon-bd"/>
</dbReference>
<dbReference type="InterPro" id="IPR009008">
    <property type="entry name" value="Val/Leu/Ile-tRNA-synth_edit"/>
</dbReference>
<dbReference type="NCBIfam" id="TIGR00396">
    <property type="entry name" value="leuS_bact"/>
    <property type="match status" value="1"/>
</dbReference>
<dbReference type="PANTHER" id="PTHR43740:SF2">
    <property type="entry name" value="LEUCINE--TRNA LIGASE, MITOCHONDRIAL"/>
    <property type="match status" value="1"/>
</dbReference>
<dbReference type="PANTHER" id="PTHR43740">
    <property type="entry name" value="LEUCYL-TRNA SYNTHETASE"/>
    <property type="match status" value="1"/>
</dbReference>
<dbReference type="Pfam" id="PF08264">
    <property type="entry name" value="Anticodon_1"/>
    <property type="match status" value="1"/>
</dbReference>
<dbReference type="Pfam" id="PF00133">
    <property type="entry name" value="tRNA-synt_1"/>
    <property type="match status" value="1"/>
</dbReference>
<dbReference type="Pfam" id="PF13603">
    <property type="entry name" value="tRNA-synt_1_2"/>
    <property type="match status" value="1"/>
</dbReference>
<dbReference type="Pfam" id="PF09334">
    <property type="entry name" value="tRNA-synt_1g"/>
    <property type="match status" value="1"/>
</dbReference>
<dbReference type="PRINTS" id="PR00985">
    <property type="entry name" value="TRNASYNTHLEU"/>
</dbReference>
<dbReference type="SUPFAM" id="SSF47323">
    <property type="entry name" value="Anticodon-binding domain of a subclass of class I aminoacyl-tRNA synthetases"/>
    <property type="match status" value="1"/>
</dbReference>
<dbReference type="SUPFAM" id="SSF52374">
    <property type="entry name" value="Nucleotidylyl transferase"/>
    <property type="match status" value="1"/>
</dbReference>
<dbReference type="SUPFAM" id="SSF50677">
    <property type="entry name" value="ValRS/IleRS/LeuRS editing domain"/>
    <property type="match status" value="1"/>
</dbReference>
<dbReference type="PROSITE" id="PS00178">
    <property type="entry name" value="AA_TRNA_LIGASE_I"/>
    <property type="match status" value="1"/>
</dbReference>
<gene>
    <name evidence="1" type="primary">leuS</name>
    <name type="ordered locus">ABBFA_003015</name>
</gene>
<organism>
    <name type="scientific">Acinetobacter baumannii (strain AB307-0294)</name>
    <dbReference type="NCBI Taxonomy" id="557600"/>
    <lineage>
        <taxon>Bacteria</taxon>
        <taxon>Pseudomonadati</taxon>
        <taxon>Pseudomonadota</taxon>
        <taxon>Gammaproteobacteria</taxon>
        <taxon>Moraxellales</taxon>
        <taxon>Moraxellaceae</taxon>
        <taxon>Acinetobacter</taxon>
        <taxon>Acinetobacter calcoaceticus/baumannii complex</taxon>
    </lineage>
</organism>
<protein>
    <recommendedName>
        <fullName evidence="1">Leucine--tRNA ligase</fullName>
        <ecNumber evidence="1">6.1.1.4</ecNumber>
    </recommendedName>
    <alternativeName>
        <fullName evidence="1">Leucyl-tRNA synthetase</fullName>
        <shortName evidence="1">LeuRS</shortName>
    </alternativeName>
</protein>
<name>SYL_ACIB3</name>
<comment type="catalytic activity">
    <reaction evidence="1">
        <text>tRNA(Leu) + L-leucine + ATP = L-leucyl-tRNA(Leu) + AMP + diphosphate</text>
        <dbReference type="Rhea" id="RHEA:11688"/>
        <dbReference type="Rhea" id="RHEA-COMP:9613"/>
        <dbReference type="Rhea" id="RHEA-COMP:9622"/>
        <dbReference type="ChEBI" id="CHEBI:30616"/>
        <dbReference type="ChEBI" id="CHEBI:33019"/>
        <dbReference type="ChEBI" id="CHEBI:57427"/>
        <dbReference type="ChEBI" id="CHEBI:78442"/>
        <dbReference type="ChEBI" id="CHEBI:78494"/>
        <dbReference type="ChEBI" id="CHEBI:456215"/>
        <dbReference type="EC" id="6.1.1.4"/>
    </reaction>
</comment>
<comment type="subcellular location">
    <subcellularLocation>
        <location evidence="1">Cytoplasm</location>
    </subcellularLocation>
</comment>
<comment type="similarity">
    <text evidence="1">Belongs to the class-I aminoacyl-tRNA synthetase family.</text>
</comment>
<feature type="chain" id="PRO_1000199170" description="Leucine--tRNA ligase">
    <location>
        <begin position="1"/>
        <end position="874"/>
    </location>
</feature>
<feature type="short sequence motif" description="'HIGH' region">
    <location>
        <begin position="47"/>
        <end position="57"/>
    </location>
</feature>
<feature type="short sequence motif" description="'KMSKS' region">
    <location>
        <begin position="636"/>
        <end position="640"/>
    </location>
</feature>
<feature type="binding site" evidence="1">
    <location>
        <position position="639"/>
    </location>
    <ligand>
        <name>ATP</name>
        <dbReference type="ChEBI" id="CHEBI:30616"/>
    </ligand>
</feature>